<comment type="similarity">
    <text evidence="1">Belongs to the universal ribosomal protein uS2 family.</text>
</comment>
<proteinExistence type="inferred from homology"/>
<organism>
    <name type="scientific">Desulfitobacterium hafniense (strain DSM 10664 / DCB-2)</name>
    <dbReference type="NCBI Taxonomy" id="272564"/>
    <lineage>
        <taxon>Bacteria</taxon>
        <taxon>Bacillati</taxon>
        <taxon>Bacillota</taxon>
        <taxon>Clostridia</taxon>
        <taxon>Eubacteriales</taxon>
        <taxon>Desulfitobacteriaceae</taxon>
        <taxon>Desulfitobacterium</taxon>
    </lineage>
</organism>
<gene>
    <name evidence="1" type="primary">rpsB</name>
    <name type="ordered locus">Dhaf_3709</name>
</gene>
<protein>
    <recommendedName>
        <fullName evidence="1">Small ribosomal subunit protein uS2</fullName>
    </recommendedName>
    <alternativeName>
        <fullName evidence="3">30S ribosomal protein S2</fullName>
    </alternativeName>
</protein>
<accession>B8FRG5</accession>
<reference key="1">
    <citation type="journal article" date="2012" name="BMC Microbiol.">
        <title>Genome sequence of Desulfitobacterium hafniense DCB-2, a Gram-positive anaerobe capable of dehalogenation and metal reduction.</title>
        <authorList>
            <person name="Kim S.H."/>
            <person name="Harzman C."/>
            <person name="Davis J.K."/>
            <person name="Hutcheson R."/>
            <person name="Broderick J.B."/>
            <person name="Marsh T.L."/>
            <person name="Tiedje J.M."/>
        </authorList>
    </citation>
    <scope>NUCLEOTIDE SEQUENCE [LARGE SCALE GENOMIC DNA]</scope>
    <source>
        <strain>DSM 10664 / DCB-2</strain>
    </source>
</reference>
<evidence type="ECO:0000255" key="1">
    <source>
        <dbReference type="HAMAP-Rule" id="MF_00291"/>
    </source>
</evidence>
<evidence type="ECO:0000256" key="2">
    <source>
        <dbReference type="SAM" id="MobiDB-lite"/>
    </source>
</evidence>
<evidence type="ECO:0000305" key="3"/>
<name>RS2_DESHD</name>
<dbReference type="EMBL" id="CP001336">
    <property type="protein sequence ID" value="ACL21725.1"/>
    <property type="molecule type" value="Genomic_DNA"/>
</dbReference>
<dbReference type="RefSeq" id="WP_011460417.1">
    <property type="nucleotide sequence ID" value="NC_011830.1"/>
</dbReference>
<dbReference type="SMR" id="B8FRG5"/>
<dbReference type="KEGG" id="dhd:Dhaf_3709"/>
<dbReference type="HOGENOM" id="CLU_040318_1_2_9"/>
<dbReference type="Proteomes" id="UP000007726">
    <property type="component" value="Chromosome"/>
</dbReference>
<dbReference type="GO" id="GO:0022627">
    <property type="term" value="C:cytosolic small ribosomal subunit"/>
    <property type="evidence" value="ECO:0007669"/>
    <property type="project" value="TreeGrafter"/>
</dbReference>
<dbReference type="GO" id="GO:0003735">
    <property type="term" value="F:structural constituent of ribosome"/>
    <property type="evidence" value="ECO:0007669"/>
    <property type="project" value="InterPro"/>
</dbReference>
<dbReference type="GO" id="GO:0006412">
    <property type="term" value="P:translation"/>
    <property type="evidence" value="ECO:0007669"/>
    <property type="project" value="UniProtKB-UniRule"/>
</dbReference>
<dbReference type="CDD" id="cd01425">
    <property type="entry name" value="RPS2"/>
    <property type="match status" value="1"/>
</dbReference>
<dbReference type="FunFam" id="1.10.287.610:FF:000001">
    <property type="entry name" value="30S ribosomal protein S2"/>
    <property type="match status" value="1"/>
</dbReference>
<dbReference type="Gene3D" id="3.40.50.10490">
    <property type="entry name" value="Glucose-6-phosphate isomerase like protein, domain 1"/>
    <property type="match status" value="1"/>
</dbReference>
<dbReference type="Gene3D" id="1.10.287.610">
    <property type="entry name" value="Helix hairpin bin"/>
    <property type="match status" value="1"/>
</dbReference>
<dbReference type="HAMAP" id="MF_00291_B">
    <property type="entry name" value="Ribosomal_uS2_B"/>
    <property type="match status" value="1"/>
</dbReference>
<dbReference type="InterPro" id="IPR001865">
    <property type="entry name" value="Ribosomal_uS2"/>
</dbReference>
<dbReference type="InterPro" id="IPR005706">
    <property type="entry name" value="Ribosomal_uS2_bac/mit/plastid"/>
</dbReference>
<dbReference type="InterPro" id="IPR018130">
    <property type="entry name" value="Ribosomal_uS2_CS"/>
</dbReference>
<dbReference type="InterPro" id="IPR023591">
    <property type="entry name" value="Ribosomal_uS2_flav_dom_sf"/>
</dbReference>
<dbReference type="NCBIfam" id="TIGR01011">
    <property type="entry name" value="rpsB_bact"/>
    <property type="match status" value="1"/>
</dbReference>
<dbReference type="PANTHER" id="PTHR12534">
    <property type="entry name" value="30S RIBOSOMAL PROTEIN S2 PROKARYOTIC AND ORGANELLAR"/>
    <property type="match status" value="1"/>
</dbReference>
<dbReference type="PANTHER" id="PTHR12534:SF0">
    <property type="entry name" value="SMALL RIBOSOMAL SUBUNIT PROTEIN US2M"/>
    <property type="match status" value="1"/>
</dbReference>
<dbReference type="Pfam" id="PF00318">
    <property type="entry name" value="Ribosomal_S2"/>
    <property type="match status" value="1"/>
</dbReference>
<dbReference type="PRINTS" id="PR00395">
    <property type="entry name" value="RIBOSOMALS2"/>
</dbReference>
<dbReference type="SUPFAM" id="SSF52313">
    <property type="entry name" value="Ribosomal protein S2"/>
    <property type="match status" value="1"/>
</dbReference>
<dbReference type="PROSITE" id="PS00962">
    <property type="entry name" value="RIBOSOMAL_S2_1"/>
    <property type="match status" value="1"/>
</dbReference>
<dbReference type="PROSITE" id="PS00963">
    <property type="entry name" value="RIBOSOMAL_S2_2"/>
    <property type="match status" value="1"/>
</dbReference>
<sequence length="244" mass="27622">MAVISMKQLLEAGVHFGHQTRRWNPKMARYIFTERNGIYIIDLQKTVRKVEEAYNYVRNLAADGGTVLFVGTKKQAQESVKEEAERCGMYYVNERWLGGMMTNFQTIQKRVSRLRELEKMEAEGVFEVLPKKEVAALRHEMEKLERFLGGIKSMKKLPDALFVVDPRKERIAVAEARRLNIPIVGIVDTNCDPDEIDVVIPANDDAIRAVKLLTGRIADAIIEGQQGSDEAEEAEEAAEEVVAE</sequence>
<keyword id="KW-0687">Ribonucleoprotein</keyword>
<keyword id="KW-0689">Ribosomal protein</keyword>
<feature type="chain" id="PRO_1000132642" description="Small ribosomal subunit protein uS2">
    <location>
        <begin position="1"/>
        <end position="244"/>
    </location>
</feature>
<feature type="region of interest" description="Disordered" evidence="2">
    <location>
        <begin position="224"/>
        <end position="244"/>
    </location>
</feature>
<feature type="compositionally biased region" description="Acidic residues" evidence="2">
    <location>
        <begin position="229"/>
        <end position="244"/>
    </location>
</feature>